<sequence>VLSPADKTNVKSTWDKIGGHAGEYGGEALERTFVSFPTTKTYFPHFDLSHGSAQVKAHGKKVADALTNAVAHMDDLPGALSALSDLHAYKLRVDPVNFKLLSHCLLVTLACHHPAEFTPAVHASLDKFFSAVSTVLTSKYR</sequence>
<dbReference type="PIR" id="S00816">
    <property type="entry name" value="HAOTE"/>
</dbReference>
<dbReference type="SMR" id="P10892"/>
<dbReference type="GO" id="GO:0072562">
    <property type="term" value="C:blood microparticle"/>
    <property type="evidence" value="ECO:0007669"/>
    <property type="project" value="TreeGrafter"/>
</dbReference>
<dbReference type="GO" id="GO:0031838">
    <property type="term" value="C:haptoglobin-hemoglobin complex"/>
    <property type="evidence" value="ECO:0007669"/>
    <property type="project" value="TreeGrafter"/>
</dbReference>
<dbReference type="GO" id="GO:0005833">
    <property type="term" value="C:hemoglobin complex"/>
    <property type="evidence" value="ECO:0007669"/>
    <property type="project" value="InterPro"/>
</dbReference>
<dbReference type="GO" id="GO:0031720">
    <property type="term" value="F:haptoglobin binding"/>
    <property type="evidence" value="ECO:0007669"/>
    <property type="project" value="TreeGrafter"/>
</dbReference>
<dbReference type="GO" id="GO:0020037">
    <property type="term" value="F:heme binding"/>
    <property type="evidence" value="ECO:0007669"/>
    <property type="project" value="InterPro"/>
</dbReference>
<dbReference type="GO" id="GO:0005506">
    <property type="term" value="F:iron ion binding"/>
    <property type="evidence" value="ECO:0007669"/>
    <property type="project" value="InterPro"/>
</dbReference>
<dbReference type="GO" id="GO:0043177">
    <property type="term" value="F:organic acid binding"/>
    <property type="evidence" value="ECO:0007669"/>
    <property type="project" value="TreeGrafter"/>
</dbReference>
<dbReference type="GO" id="GO:0019825">
    <property type="term" value="F:oxygen binding"/>
    <property type="evidence" value="ECO:0007669"/>
    <property type="project" value="InterPro"/>
</dbReference>
<dbReference type="GO" id="GO:0005344">
    <property type="term" value="F:oxygen carrier activity"/>
    <property type="evidence" value="ECO:0007669"/>
    <property type="project" value="UniProtKB-KW"/>
</dbReference>
<dbReference type="GO" id="GO:0004601">
    <property type="term" value="F:peroxidase activity"/>
    <property type="evidence" value="ECO:0007669"/>
    <property type="project" value="TreeGrafter"/>
</dbReference>
<dbReference type="GO" id="GO:0042744">
    <property type="term" value="P:hydrogen peroxide catabolic process"/>
    <property type="evidence" value="ECO:0007669"/>
    <property type="project" value="TreeGrafter"/>
</dbReference>
<dbReference type="CDD" id="cd08927">
    <property type="entry name" value="Hb-alpha-like"/>
    <property type="match status" value="1"/>
</dbReference>
<dbReference type="FunFam" id="1.10.490.10:FF:000002">
    <property type="entry name" value="Hemoglobin subunit alpha"/>
    <property type="match status" value="1"/>
</dbReference>
<dbReference type="Gene3D" id="1.10.490.10">
    <property type="entry name" value="Globins"/>
    <property type="match status" value="1"/>
</dbReference>
<dbReference type="InterPro" id="IPR000971">
    <property type="entry name" value="Globin"/>
</dbReference>
<dbReference type="InterPro" id="IPR009050">
    <property type="entry name" value="Globin-like_sf"/>
</dbReference>
<dbReference type="InterPro" id="IPR012292">
    <property type="entry name" value="Globin/Proto"/>
</dbReference>
<dbReference type="InterPro" id="IPR002338">
    <property type="entry name" value="Hemoglobin_a-typ"/>
</dbReference>
<dbReference type="InterPro" id="IPR050056">
    <property type="entry name" value="Hemoglobin_oxygen_transport"/>
</dbReference>
<dbReference type="InterPro" id="IPR002339">
    <property type="entry name" value="Hemoglobin_pi"/>
</dbReference>
<dbReference type="PANTHER" id="PTHR11442">
    <property type="entry name" value="HEMOGLOBIN FAMILY MEMBER"/>
    <property type="match status" value="1"/>
</dbReference>
<dbReference type="PANTHER" id="PTHR11442:SF48">
    <property type="entry name" value="HEMOGLOBIN SUBUNIT ALPHA"/>
    <property type="match status" value="1"/>
</dbReference>
<dbReference type="Pfam" id="PF00042">
    <property type="entry name" value="Globin"/>
    <property type="match status" value="1"/>
</dbReference>
<dbReference type="PRINTS" id="PR00612">
    <property type="entry name" value="ALPHAHAEM"/>
</dbReference>
<dbReference type="PRINTS" id="PR00815">
    <property type="entry name" value="PIHAEM"/>
</dbReference>
<dbReference type="SUPFAM" id="SSF46458">
    <property type="entry name" value="Globin-like"/>
    <property type="match status" value="1"/>
</dbReference>
<dbReference type="PROSITE" id="PS01033">
    <property type="entry name" value="GLOBIN"/>
    <property type="match status" value="1"/>
</dbReference>
<gene>
    <name type="primary">HBA</name>
</gene>
<comment type="function">
    <text>Involved in oxygen transport from the lung to the various peripheral tissues.</text>
</comment>
<comment type="function">
    <molecule>Hemopressin</molecule>
    <text evidence="2">Hemopressin acts as an antagonist peptide of the cannabinoid receptor CNR1. Hemopressin-binding efficiently blocks cannabinoid receptor CNR1 and subsequent signaling.</text>
</comment>
<comment type="subunit">
    <text>Heterotetramer of two alpha chains and two beta chains.</text>
</comment>
<comment type="tissue specificity">
    <text>Red blood cells.</text>
</comment>
<comment type="similarity">
    <text evidence="4">Belongs to the globin family.</text>
</comment>
<feature type="chain" id="PRO_0000052671" description="Hemoglobin subunit alpha">
    <location>
        <begin position="1"/>
        <end position="141"/>
    </location>
</feature>
<feature type="peptide" id="PRO_0000455892" description="Hemopressin" evidence="2">
    <location>
        <begin position="95"/>
        <end position="103"/>
    </location>
</feature>
<feature type="domain" description="Globin" evidence="4">
    <location>
        <begin position="1"/>
        <end position="141"/>
    </location>
</feature>
<feature type="binding site" evidence="4">
    <location>
        <position position="58"/>
    </location>
    <ligand>
        <name>O2</name>
        <dbReference type="ChEBI" id="CHEBI:15379"/>
    </ligand>
</feature>
<feature type="binding site" description="proximal binding residue" evidence="4">
    <location>
        <position position="87"/>
    </location>
    <ligand>
        <name>heme b</name>
        <dbReference type="ChEBI" id="CHEBI:60344"/>
    </ligand>
    <ligandPart>
        <name>Fe</name>
        <dbReference type="ChEBI" id="CHEBI:18248"/>
    </ligandPart>
</feature>
<feature type="modified residue" description="Phosphoserine" evidence="3">
    <location>
        <position position="3"/>
    </location>
</feature>
<feature type="modified residue" description="N6-succinyllysine" evidence="1">
    <location>
        <position position="7"/>
    </location>
</feature>
<feature type="modified residue" description="Phosphothreonine" evidence="3">
    <location>
        <position position="8"/>
    </location>
</feature>
<feature type="modified residue" description="N6-succinyllysine" evidence="1">
    <location>
        <position position="11"/>
    </location>
</feature>
<feature type="modified residue" description="N6-acetyllysine; alternate" evidence="3">
    <location>
        <position position="16"/>
    </location>
</feature>
<feature type="modified residue" description="N6-succinyllysine; alternate" evidence="1">
    <location>
        <position position="16"/>
    </location>
</feature>
<feature type="modified residue" description="Phosphotyrosine" evidence="3">
    <location>
        <position position="24"/>
    </location>
</feature>
<feature type="modified residue" description="Phosphoserine" evidence="3">
    <location>
        <position position="35"/>
    </location>
</feature>
<feature type="modified residue" description="N6-succinyllysine" evidence="1">
    <location>
        <position position="40"/>
    </location>
</feature>
<feature type="modified residue" description="Phosphoserine" evidence="3">
    <location>
        <position position="49"/>
    </location>
</feature>
<feature type="modified residue" description="Phosphoserine" evidence="1">
    <location>
        <position position="102"/>
    </location>
</feature>
<feature type="modified residue" description="Phosphothreonine" evidence="1">
    <location>
        <position position="108"/>
    </location>
</feature>
<feature type="modified residue" description="Phosphoserine" evidence="1">
    <location>
        <position position="124"/>
    </location>
</feature>
<feature type="modified residue" description="Phosphothreonine" evidence="1">
    <location>
        <position position="134"/>
    </location>
</feature>
<feature type="modified residue" description="Phosphothreonine" evidence="1">
    <location>
        <position position="137"/>
    </location>
</feature>
<feature type="modified residue" description="Phosphoserine" evidence="1">
    <location>
        <position position="138"/>
    </location>
</feature>
<protein>
    <recommendedName>
        <fullName>Hemoglobin subunit alpha</fullName>
    </recommendedName>
    <alternativeName>
        <fullName>Alpha-globin</fullName>
    </alternativeName>
    <alternativeName>
        <fullName>Hemoglobin alpha chain</fullName>
    </alternativeName>
    <component>
        <recommendedName>
            <fullName evidence="2">Hemopressin</fullName>
        </recommendedName>
    </component>
</protein>
<accession>P10892</accession>
<evidence type="ECO:0000250" key="1">
    <source>
        <dbReference type="UniProtKB" id="P01942"/>
    </source>
</evidence>
<evidence type="ECO:0000250" key="2">
    <source>
        <dbReference type="UniProtKB" id="P01946"/>
    </source>
</evidence>
<evidence type="ECO:0000250" key="3">
    <source>
        <dbReference type="UniProtKB" id="P69905"/>
    </source>
</evidence>
<evidence type="ECO:0000255" key="4">
    <source>
        <dbReference type="PROSITE-ProRule" id="PRU00238"/>
    </source>
</evidence>
<name>HBA_LUTLU</name>
<keyword id="KW-0007">Acetylation</keyword>
<keyword id="KW-0903">Direct protein sequencing</keyword>
<keyword id="KW-0349">Heme</keyword>
<keyword id="KW-0408">Iron</keyword>
<keyword id="KW-0479">Metal-binding</keyword>
<keyword id="KW-0561">Oxygen transport</keyword>
<keyword id="KW-0597">Phosphoprotein</keyword>
<keyword id="KW-0813">Transport</keyword>
<proteinExistence type="evidence at protein level"/>
<reference key="1">
    <citation type="journal article" date="1988" name="Biol. Chem. Hoppe-Seyler">
        <title>Carnivora: the primary structure of the common otter (Lutra lutra, Mustelidae) hemoglobin.</title>
        <authorList>
            <person name="Lin H.-X."/>
            <person name="Kleinschmidt T."/>
            <person name="Braunitzer G."/>
            <person name="Scheil H.-G."/>
        </authorList>
    </citation>
    <scope>PROTEIN SEQUENCE</scope>
</reference>
<organism>
    <name type="scientific">Lutra lutra</name>
    <name type="common">European river otter</name>
    <dbReference type="NCBI Taxonomy" id="9657"/>
    <lineage>
        <taxon>Eukaryota</taxon>
        <taxon>Metazoa</taxon>
        <taxon>Chordata</taxon>
        <taxon>Craniata</taxon>
        <taxon>Vertebrata</taxon>
        <taxon>Euteleostomi</taxon>
        <taxon>Mammalia</taxon>
        <taxon>Eutheria</taxon>
        <taxon>Laurasiatheria</taxon>
        <taxon>Carnivora</taxon>
        <taxon>Caniformia</taxon>
        <taxon>Musteloidea</taxon>
        <taxon>Mustelidae</taxon>
        <taxon>Lutrinae</taxon>
        <taxon>Lutra</taxon>
    </lineage>
</organism>